<dbReference type="EC" id="1.1.1.282" evidence="1"/>
<dbReference type="EMBL" id="CP000800">
    <property type="protein sequence ID" value="ABV21160.1"/>
    <property type="molecule type" value="Genomic_DNA"/>
</dbReference>
<dbReference type="RefSeq" id="WP_000383496.1">
    <property type="nucleotide sequence ID" value="NC_009801.1"/>
</dbReference>
<dbReference type="SMR" id="A7ZMF7"/>
<dbReference type="KEGG" id="ecw:EcE24377A_1908"/>
<dbReference type="HOGENOM" id="CLU_044063_4_4_6"/>
<dbReference type="UniPathway" id="UPA00053">
    <property type="reaction ID" value="UER00087"/>
</dbReference>
<dbReference type="Proteomes" id="UP000001122">
    <property type="component" value="Chromosome"/>
</dbReference>
<dbReference type="GO" id="GO:0030266">
    <property type="term" value="F:quinate 3-dehydrogenase (NAD+) activity"/>
    <property type="evidence" value="ECO:0007669"/>
    <property type="project" value="UniProtKB-UniRule"/>
</dbReference>
<dbReference type="GO" id="GO:0052733">
    <property type="term" value="F:quinate 3-dehydrogenase (NADP+) activity"/>
    <property type="evidence" value="ECO:0007669"/>
    <property type="project" value="InterPro"/>
</dbReference>
<dbReference type="GO" id="GO:0052734">
    <property type="term" value="F:shikimate 3-dehydrogenase (NAD+) activity"/>
    <property type="evidence" value="ECO:0007669"/>
    <property type="project" value="InterPro"/>
</dbReference>
<dbReference type="GO" id="GO:0004764">
    <property type="term" value="F:shikimate 3-dehydrogenase (NADP+) activity"/>
    <property type="evidence" value="ECO:0007669"/>
    <property type="project" value="UniProtKB-UniRule"/>
</dbReference>
<dbReference type="GO" id="GO:0008652">
    <property type="term" value="P:amino acid biosynthetic process"/>
    <property type="evidence" value="ECO:0007669"/>
    <property type="project" value="UniProtKB-KW"/>
</dbReference>
<dbReference type="GO" id="GO:0009073">
    <property type="term" value="P:aromatic amino acid family biosynthetic process"/>
    <property type="evidence" value="ECO:0007669"/>
    <property type="project" value="UniProtKB-KW"/>
</dbReference>
<dbReference type="GO" id="GO:0009423">
    <property type="term" value="P:chorismate biosynthetic process"/>
    <property type="evidence" value="ECO:0007669"/>
    <property type="project" value="UniProtKB-UniRule"/>
</dbReference>
<dbReference type="GO" id="GO:0019632">
    <property type="term" value="P:shikimate metabolic process"/>
    <property type="evidence" value="ECO:0007669"/>
    <property type="project" value="TreeGrafter"/>
</dbReference>
<dbReference type="CDD" id="cd01065">
    <property type="entry name" value="NAD_bind_Shikimate_DH"/>
    <property type="match status" value="1"/>
</dbReference>
<dbReference type="FunFam" id="3.40.50.10860:FF:000004">
    <property type="entry name" value="Quinate/shikimate dehydrogenase"/>
    <property type="match status" value="1"/>
</dbReference>
<dbReference type="FunFam" id="3.40.50.720:FF:000086">
    <property type="entry name" value="Quinate/shikimate dehydrogenase"/>
    <property type="match status" value="1"/>
</dbReference>
<dbReference type="Gene3D" id="3.40.50.10860">
    <property type="entry name" value="Leucine Dehydrogenase, chain A, domain 1"/>
    <property type="match status" value="1"/>
</dbReference>
<dbReference type="Gene3D" id="3.40.50.720">
    <property type="entry name" value="NAD(P)-binding Rossmann-like Domain"/>
    <property type="match status" value="1"/>
</dbReference>
<dbReference type="HAMAP" id="MF_00222">
    <property type="entry name" value="Shikimate_DH_AroE"/>
    <property type="match status" value="1"/>
</dbReference>
<dbReference type="HAMAP" id="MF_01578">
    <property type="entry name" value="Shikimate_DH_YdiB"/>
    <property type="match status" value="1"/>
</dbReference>
<dbReference type="InterPro" id="IPR046346">
    <property type="entry name" value="Aminoacid_DH-like_N_sf"/>
</dbReference>
<dbReference type="InterPro" id="IPR036291">
    <property type="entry name" value="NAD(P)-bd_dom_sf"/>
</dbReference>
<dbReference type="InterPro" id="IPR022872">
    <property type="entry name" value="Quinate/Shikimate_DH"/>
</dbReference>
<dbReference type="InterPro" id="IPR041121">
    <property type="entry name" value="SDH_C"/>
</dbReference>
<dbReference type="InterPro" id="IPR013708">
    <property type="entry name" value="Shikimate_DH-bd_N"/>
</dbReference>
<dbReference type="InterPro" id="IPR022893">
    <property type="entry name" value="Shikimate_DH_fam"/>
</dbReference>
<dbReference type="NCBIfam" id="NF009390">
    <property type="entry name" value="PRK12749.1"/>
    <property type="match status" value="1"/>
</dbReference>
<dbReference type="PANTHER" id="PTHR21089:SF1">
    <property type="entry name" value="BIFUNCTIONAL 3-DEHYDROQUINATE DEHYDRATASE_SHIKIMATE DEHYDROGENASE, CHLOROPLASTIC"/>
    <property type="match status" value="1"/>
</dbReference>
<dbReference type="PANTHER" id="PTHR21089">
    <property type="entry name" value="SHIKIMATE DEHYDROGENASE"/>
    <property type="match status" value="1"/>
</dbReference>
<dbReference type="Pfam" id="PF18317">
    <property type="entry name" value="SDH_C"/>
    <property type="match status" value="1"/>
</dbReference>
<dbReference type="Pfam" id="PF08501">
    <property type="entry name" value="Shikimate_dh_N"/>
    <property type="match status" value="1"/>
</dbReference>
<dbReference type="SUPFAM" id="SSF53223">
    <property type="entry name" value="Aminoacid dehydrogenase-like, N-terminal domain"/>
    <property type="match status" value="1"/>
</dbReference>
<dbReference type="SUPFAM" id="SSF51735">
    <property type="entry name" value="NAD(P)-binding Rossmann-fold domains"/>
    <property type="match status" value="1"/>
</dbReference>
<organism>
    <name type="scientific">Escherichia coli O139:H28 (strain E24377A / ETEC)</name>
    <dbReference type="NCBI Taxonomy" id="331111"/>
    <lineage>
        <taxon>Bacteria</taxon>
        <taxon>Pseudomonadati</taxon>
        <taxon>Pseudomonadota</taxon>
        <taxon>Gammaproteobacteria</taxon>
        <taxon>Enterobacterales</taxon>
        <taxon>Enterobacteriaceae</taxon>
        <taxon>Escherichia</taxon>
    </lineage>
</organism>
<accession>A7ZMF7</accession>
<protein>
    <recommendedName>
        <fullName evidence="1">Quinate/shikimate dehydrogenase</fullName>
        <ecNumber evidence="1">1.1.1.282</ecNumber>
    </recommendedName>
    <alternativeName>
        <fullName evidence="1">NAD-dependent shikimate 5-dehydrogenase</fullName>
    </alternativeName>
</protein>
<evidence type="ECO:0000255" key="1">
    <source>
        <dbReference type="HAMAP-Rule" id="MF_01578"/>
    </source>
</evidence>
<keyword id="KW-0028">Amino-acid biosynthesis</keyword>
<keyword id="KW-0057">Aromatic amino acid biosynthesis</keyword>
<keyword id="KW-0520">NAD</keyword>
<keyword id="KW-0521">NADP</keyword>
<keyword id="KW-0560">Oxidoreductase</keyword>
<keyword id="KW-1185">Reference proteome</keyword>
<feature type="chain" id="PRO_1000069268" description="Quinate/shikimate dehydrogenase">
    <location>
        <begin position="1"/>
        <end position="288"/>
    </location>
</feature>
<feature type="binding site" evidence="1">
    <location>
        <position position="71"/>
    </location>
    <ligand>
        <name>substrate</name>
    </ligand>
</feature>
<feature type="binding site" evidence="1">
    <location>
        <position position="107"/>
    </location>
    <ligand>
        <name>substrate</name>
    </ligand>
</feature>
<feature type="binding site" evidence="1">
    <location>
        <begin position="132"/>
        <end position="135"/>
    </location>
    <ligand>
        <name>NAD(+)</name>
        <dbReference type="ChEBI" id="CHEBI:57540"/>
    </ligand>
</feature>
<feature type="binding site" evidence="1">
    <location>
        <begin position="155"/>
        <end position="158"/>
    </location>
    <ligand>
        <name>NAD(+)</name>
        <dbReference type="ChEBI" id="CHEBI:57540"/>
    </ligand>
</feature>
<feature type="binding site" evidence="1">
    <location>
        <position position="205"/>
    </location>
    <ligand>
        <name>NAD(+)</name>
        <dbReference type="ChEBI" id="CHEBI:57540"/>
    </ligand>
</feature>
<feature type="binding site" evidence="1">
    <location>
        <begin position="232"/>
        <end position="235"/>
    </location>
    <ligand>
        <name>NAD(+)</name>
        <dbReference type="ChEBI" id="CHEBI:57540"/>
    </ligand>
</feature>
<feature type="binding site" evidence="1">
    <location>
        <position position="255"/>
    </location>
    <ligand>
        <name>NAD(+)</name>
        <dbReference type="ChEBI" id="CHEBI:57540"/>
    </ligand>
</feature>
<name>YDIB_ECO24</name>
<proteinExistence type="inferred from homology"/>
<sequence>MDVTAKYELIGLMAYPIRHSLSPKMQNKALEKAGLPFTYMAFEVDNDSFPGAIEGLKALKMRGTGISMPNKQLACEYVDELTPAAKLVGAINTIVNDDGYLRGYNTDGTGHIRAIKESGFDIKGKTMVLLGAGGASTAIGAQGAIEGLKEIKLFNRRDEFFDKALAFAQRVNENTDCVVTVTDLADQQAFAEALASADILTNGTKVGMKPLENESLVNDISLLHPGLLVTECVYNPHMTKLLQQAQQAGCKTIDGYGMLLWQGAEQFTLWTGKDFPLEYVKQVMGFGA</sequence>
<reference key="1">
    <citation type="journal article" date="2008" name="J. Bacteriol.">
        <title>The pangenome structure of Escherichia coli: comparative genomic analysis of E. coli commensal and pathogenic isolates.</title>
        <authorList>
            <person name="Rasko D.A."/>
            <person name="Rosovitz M.J."/>
            <person name="Myers G.S.A."/>
            <person name="Mongodin E.F."/>
            <person name="Fricke W.F."/>
            <person name="Gajer P."/>
            <person name="Crabtree J."/>
            <person name="Sebaihia M."/>
            <person name="Thomson N.R."/>
            <person name="Chaudhuri R."/>
            <person name="Henderson I.R."/>
            <person name="Sperandio V."/>
            <person name="Ravel J."/>
        </authorList>
    </citation>
    <scope>NUCLEOTIDE SEQUENCE [LARGE SCALE GENOMIC DNA]</scope>
    <source>
        <strain>E24377A / ETEC</strain>
    </source>
</reference>
<gene>
    <name evidence="1" type="primary">ydiB</name>
    <name type="ordered locus">EcE24377A_1908</name>
</gene>
<comment type="function">
    <text evidence="1">The actual biological function of YdiB remains unclear, nor is it known whether 3-dehydroshikimate or quinate represents the natural substrate. Catalyzes the reversible NAD-dependent reduction of both 3-dehydroshikimate (DHSA) and 3-dehydroquinate to yield shikimate (SA) and quinate, respectively. It can use both NAD or NADP for catalysis, however it has higher catalytic efficiency with NAD.</text>
</comment>
<comment type="catalytic activity">
    <reaction evidence="1">
        <text>L-quinate + NAD(+) = 3-dehydroquinate + NADH + H(+)</text>
        <dbReference type="Rhea" id="RHEA:22364"/>
        <dbReference type="ChEBI" id="CHEBI:15378"/>
        <dbReference type="ChEBI" id="CHEBI:29751"/>
        <dbReference type="ChEBI" id="CHEBI:32364"/>
        <dbReference type="ChEBI" id="CHEBI:57540"/>
        <dbReference type="ChEBI" id="CHEBI:57945"/>
        <dbReference type="EC" id="1.1.1.282"/>
    </reaction>
</comment>
<comment type="catalytic activity">
    <reaction evidence="1">
        <text>L-quinate + NADP(+) = 3-dehydroquinate + NADPH + H(+)</text>
        <dbReference type="Rhea" id="RHEA:18425"/>
        <dbReference type="ChEBI" id="CHEBI:15378"/>
        <dbReference type="ChEBI" id="CHEBI:29751"/>
        <dbReference type="ChEBI" id="CHEBI:32364"/>
        <dbReference type="ChEBI" id="CHEBI:57783"/>
        <dbReference type="ChEBI" id="CHEBI:58349"/>
        <dbReference type="EC" id="1.1.1.282"/>
    </reaction>
</comment>
<comment type="catalytic activity">
    <reaction evidence="1">
        <text>shikimate + NADP(+) = 3-dehydroshikimate + NADPH + H(+)</text>
        <dbReference type="Rhea" id="RHEA:17737"/>
        <dbReference type="ChEBI" id="CHEBI:15378"/>
        <dbReference type="ChEBI" id="CHEBI:16630"/>
        <dbReference type="ChEBI" id="CHEBI:36208"/>
        <dbReference type="ChEBI" id="CHEBI:57783"/>
        <dbReference type="ChEBI" id="CHEBI:58349"/>
        <dbReference type="EC" id="1.1.1.282"/>
    </reaction>
</comment>
<comment type="catalytic activity">
    <reaction evidence="1">
        <text>shikimate + NAD(+) = 3-dehydroshikimate + NADH + H(+)</text>
        <dbReference type="Rhea" id="RHEA:17741"/>
        <dbReference type="ChEBI" id="CHEBI:15378"/>
        <dbReference type="ChEBI" id="CHEBI:16630"/>
        <dbReference type="ChEBI" id="CHEBI:36208"/>
        <dbReference type="ChEBI" id="CHEBI:57540"/>
        <dbReference type="ChEBI" id="CHEBI:57945"/>
        <dbReference type="EC" id="1.1.1.282"/>
    </reaction>
</comment>
<comment type="pathway">
    <text evidence="1">Metabolic intermediate biosynthesis; chorismate biosynthesis; chorismate from D-erythrose 4-phosphate and phosphoenolpyruvate: step 4/7.</text>
</comment>
<comment type="subunit">
    <text evidence="1">Homodimer.</text>
</comment>
<comment type="similarity">
    <text evidence="1">Belongs to the shikimate dehydrogenase family.</text>
</comment>